<accession>Q669A6</accession>
<sequence length="325" mass="36185">MSWFTPELIEILISVLKAVVILLVVVTCGAFMSFGERRLLGLFQNRYGPNRVGWGGSLQLVADMIKMFFKEDWVPRFSDRAIFTLAPVIAFTSLLLSFAIVPVSPTWAVADLNIGILFFLMMAGLAVYAVLFAGWASNNKYSLLGAMRASAQTLSYEVFLGLSLMGVVAQAGSFNMQDIVNSQEHVWNVIPQFFGFLTFAIAGVAVCHRHPFDQPEAEQELADGYHIEYSGMKFGLFFVGEYIGIVTVSALIVTLFFGGWQGPFLPPFIWFALKTAFFMVMFILIRASLPRPRYDQVMSFGWKVCLPLTLLNLLATAAVILYNAQ</sequence>
<evidence type="ECO:0000255" key="1">
    <source>
        <dbReference type="HAMAP-Rule" id="MF_01350"/>
    </source>
</evidence>
<name>NUOH_YERPS</name>
<reference key="1">
    <citation type="journal article" date="2004" name="Proc. Natl. Acad. Sci. U.S.A.">
        <title>Insights into the evolution of Yersinia pestis through whole-genome comparison with Yersinia pseudotuberculosis.</title>
        <authorList>
            <person name="Chain P.S.G."/>
            <person name="Carniel E."/>
            <person name="Larimer F.W."/>
            <person name="Lamerdin J."/>
            <person name="Stoutland P.O."/>
            <person name="Regala W.M."/>
            <person name="Georgescu A.M."/>
            <person name="Vergez L.M."/>
            <person name="Land M.L."/>
            <person name="Motin V.L."/>
            <person name="Brubaker R.R."/>
            <person name="Fowler J."/>
            <person name="Hinnebusch J."/>
            <person name="Marceau M."/>
            <person name="Medigue C."/>
            <person name="Simonet M."/>
            <person name="Chenal-Francisque V."/>
            <person name="Souza B."/>
            <person name="Dacheux D."/>
            <person name="Elliott J.M."/>
            <person name="Derbise A."/>
            <person name="Hauser L.J."/>
            <person name="Garcia E."/>
        </authorList>
    </citation>
    <scope>NUCLEOTIDE SEQUENCE [LARGE SCALE GENOMIC DNA]</scope>
    <source>
        <strain>IP32953</strain>
    </source>
</reference>
<protein>
    <recommendedName>
        <fullName evidence="1">NADH-quinone oxidoreductase subunit H</fullName>
        <ecNumber evidence="1">7.1.1.-</ecNumber>
    </recommendedName>
    <alternativeName>
        <fullName evidence="1">NADH dehydrogenase I subunit H</fullName>
    </alternativeName>
    <alternativeName>
        <fullName evidence="1">NDH-1 subunit H</fullName>
    </alternativeName>
</protein>
<proteinExistence type="inferred from homology"/>
<keyword id="KW-0997">Cell inner membrane</keyword>
<keyword id="KW-1003">Cell membrane</keyword>
<keyword id="KW-0472">Membrane</keyword>
<keyword id="KW-0520">NAD</keyword>
<keyword id="KW-0874">Quinone</keyword>
<keyword id="KW-1278">Translocase</keyword>
<keyword id="KW-0812">Transmembrane</keyword>
<keyword id="KW-1133">Transmembrane helix</keyword>
<keyword id="KW-0830">Ubiquinone</keyword>
<organism>
    <name type="scientific">Yersinia pseudotuberculosis serotype I (strain IP32953)</name>
    <dbReference type="NCBI Taxonomy" id="273123"/>
    <lineage>
        <taxon>Bacteria</taxon>
        <taxon>Pseudomonadati</taxon>
        <taxon>Pseudomonadota</taxon>
        <taxon>Gammaproteobacteria</taxon>
        <taxon>Enterobacterales</taxon>
        <taxon>Yersiniaceae</taxon>
        <taxon>Yersinia</taxon>
    </lineage>
</organism>
<dbReference type="EC" id="7.1.1.-" evidence="1"/>
<dbReference type="EMBL" id="BX936398">
    <property type="protein sequence ID" value="CAH21819.1"/>
    <property type="molecule type" value="Genomic_DNA"/>
</dbReference>
<dbReference type="RefSeq" id="WP_002210274.1">
    <property type="nucleotide sequence ID" value="NZ_CP009712.1"/>
</dbReference>
<dbReference type="SMR" id="Q669A6"/>
<dbReference type="GeneID" id="96666080"/>
<dbReference type="KEGG" id="ypo:BZ17_4057"/>
<dbReference type="KEGG" id="yps:YPTB2581"/>
<dbReference type="PATRIC" id="fig|273123.14.peg.4262"/>
<dbReference type="Proteomes" id="UP000001011">
    <property type="component" value="Chromosome"/>
</dbReference>
<dbReference type="GO" id="GO:0005886">
    <property type="term" value="C:plasma membrane"/>
    <property type="evidence" value="ECO:0007669"/>
    <property type="project" value="UniProtKB-SubCell"/>
</dbReference>
<dbReference type="GO" id="GO:0003954">
    <property type="term" value="F:NADH dehydrogenase activity"/>
    <property type="evidence" value="ECO:0007669"/>
    <property type="project" value="TreeGrafter"/>
</dbReference>
<dbReference type="GO" id="GO:0016655">
    <property type="term" value="F:oxidoreductase activity, acting on NAD(P)H, quinone or similar compound as acceptor"/>
    <property type="evidence" value="ECO:0007669"/>
    <property type="project" value="UniProtKB-UniRule"/>
</dbReference>
<dbReference type="GO" id="GO:0048038">
    <property type="term" value="F:quinone binding"/>
    <property type="evidence" value="ECO:0007669"/>
    <property type="project" value="UniProtKB-KW"/>
</dbReference>
<dbReference type="GO" id="GO:0009060">
    <property type="term" value="P:aerobic respiration"/>
    <property type="evidence" value="ECO:0007669"/>
    <property type="project" value="TreeGrafter"/>
</dbReference>
<dbReference type="HAMAP" id="MF_01350">
    <property type="entry name" value="NDH1_NuoH"/>
    <property type="match status" value="1"/>
</dbReference>
<dbReference type="InterPro" id="IPR001694">
    <property type="entry name" value="NADH_UbQ_OxRdtase_su1/FPO"/>
</dbReference>
<dbReference type="InterPro" id="IPR018086">
    <property type="entry name" value="NADH_UbQ_OxRdtase_su1_CS"/>
</dbReference>
<dbReference type="NCBIfam" id="NF004740">
    <property type="entry name" value="PRK06076.1-1"/>
    <property type="match status" value="1"/>
</dbReference>
<dbReference type="NCBIfam" id="NF004741">
    <property type="entry name" value="PRK06076.1-2"/>
    <property type="match status" value="1"/>
</dbReference>
<dbReference type="PANTHER" id="PTHR11432">
    <property type="entry name" value="NADH DEHYDROGENASE SUBUNIT 1"/>
    <property type="match status" value="1"/>
</dbReference>
<dbReference type="PANTHER" id="PTHR11432:SF3">
    <property type="entry name" value="NADH-UBIQUINONE OXIDOREDUCTASE CHAIN 1"/>
    <property type="match status" value="1"/>
</dbReference>
<dbReference type="Pfam" id="PF00146">
    <property type="entry name" value="NADHdh"/>
    <property type="match status" value="1"/>
</dbReference>
<dbReference type="PROSITE" id="PS00667">
    <property type="entry name" value="COMPLEX1_ND1_1"/>
    <property type="match status" value="1"/>
</dbReference>
<dbReference type="PROSITE" id="PS00668">
    <property type="entry name" value="COMPLEX1_ND1_2"/>
    <property type="match status" value="1"/>
</dbReference>
<comment type="function">
    <text evidence="1">NDH-1 shuttles electrons from NADH, via FMN and iron-sulfur (Fe-S) centers, to quinones in the respiratory chain. The immediate electron acceptor for the enzyme in this species is believed to be ubiquinone. Couples the redox reaction to proton translocation (for every two electrons transferred, four hydrogen ions are translocated across the cytoplasmic membrane), and thus conserves the redox energy in a proton gradient. This subunit may bind ubiquinone.</text>
</comment>
<comment type="catalytic activity">
    <reaction evidence="1">
        <text>a quinone + NADH + 5 H(+)(in) = a quinol + NAD(+) + 4 H(+)(out)</text>
        <dbReference type="Rhea" id="RHEA:57888"/>
        <dbReference type="ChEBI" id="CHEBI:15378"/>
        <dbReference type="ChEBI" id="CHEBI:24646"/>
        <dbReference type="ChEBI" id="CHEBI:57540"/>
        <dbReference type="ChEBI" id="CHEBI:57945"/>
        <dbReference type="ChEBI" id="CHEBI:132124"/>
    </reaction>
</comment>
<comment type="subunit">
    <text evidence="1">NDH-1 is composed of 13 different subunits. Subunits NuoA, H, J, K, L, M, N constitute the membrane sector of the complex.</text>
</comment>
<comment type="subcellular location">
    <subcellularLocation>
        <location evidence="1">Cell inner membrane</location>
        <topology evidence="1">Multi-pass membrane protein</topology>
    </subcellularLocation>
</comment>
<comment type="similarity">
    <text evidence="1">Belongs to the complex I subunit 1 family.</text>
</comment>
<gene>
    <name evidence="1" type="primary">nuoH</name>
    <name type="ordered locus">YPTB2581</name>
</gene>
<feature type="chain" id="PRO_0000244969" description="NADH-quinone oxidoreductase subunit H">
    <location>
        <begin position="1"/>
        <end position="325"/>
    </location>
</feature>
<feature type="transmembrane region" description="Helical" evidence="1">
    <location>
        <begin position="11"/>
        <end position="31"/>
    </location>
</feature>
<feature type="transmembrane region" description="Helical" evidence="1">
    <location>
        <begin position="81"/>
        <end position="101"/>
    </location>
</feature>
<feature type="transmembrane region" description="Helical" evidence="1">
    <location>
        <begin position="114"/>
        <end position="134"/>
    </location>
</feature>
<feature type="transmembrane region" description="Helical" evidence="1">
    <location>
        <begin position="154"/>
        <end position="174"/>
    </location>
</feature>
<feature type="transmembrane region" description="Helical" evidence="1">
    <location>
        <begin position="186"/>
        <end position="206"/>
    </location>
</feature>
<feature type="transmembrane region" description="Helical" evidence="1">
    <location>
        <begin position="237"/>
        <end position="257"/>
    </location>
</feature>
<feature type="transmembrane region" description="Helical" evidence="1">
    <location>
        <begin position="265"/>
        <end position="285"/>
    </location>
</feature>
<feature type="transmembrane region" description="Helical" evidence="1">
    <location>
        <begin position="304"/>
        <end position="324"/>
    </location>
</feature>